<protein>
    <recommendedName>
        <fullName evidence="3">Conserved oligomeric Golgi complex subunit 4</fullName>
        <shortName evidence="3">COG complex subunit 4</shortName>
    </recommendedName>
    <alternativeName>
        <fullName evidence="3">Component of oligomeric Golgi complex 4</fullName>
    </alternativeName>
</protein>
<organism>
    <name type="scientific">Arabidopsis thaliana</name>
    <name type="common">Mouse-ear cress</name>
    <dbReference type="NCBI Taxonomy" id="3702"/>
    <lineage>
        <taxon>Eukaryota</taxon>
        <taxon>Viridiplantae</taxon>
        <taxon>Streptophyta</taxon>
        <taxon>Embryophyta</taxon>
        <taxon>Tracheophyta</taxon>
        <taxon>Spermatophyta</taxon>
        <taxon>Magnoliopsida</taxon>
        <taxon>eudicotyledons</taxon>
        <taxon>Gunneridae</taxon>
        <taxon>Pentapetalae</taxon>
        <taxon>rosids</taxon>
        <taxon>malvids</taxon>
        <taxon>Brassicales</taxon>
        <taxon>Brassicaceae</taxon>
        <taxon>Camelineae</taxon>
        <taxon>Arabidopsis</taxon>
    </lineage>
</organism>
<accession>Q8L838</accession>
<accession>O81330</accession>
<accession>Q9M133</accession>
<gene>
    <name evidence="3" type="primary">COG4</name>
    <name evidence="6" type="ordered locus">At4g01395</name>
    <name evidence="7" type="ORF">F3D13.1</name>
</gene>
<evidence type="ECO:0000250" key="1">
    <source>
        <dbReference type="UniProtKB" id="Q9H9E3"/>
    </source>
</evidence>
<evidence type="ECO:0000269" key="2">
    <source>
    </source>
</evidence>
<evidence type="ECO:0000303" key="3">
    <source>
    </source>
</evidence>
<evidence type="ECO:0000305" key="4"/>
<evidence type="ECO:0000305" key="5">
    <source>
    </source>
</evidence>
<evidence type="ECO:0000312" key="6">
    <source>
        <dbReference type="Araport" id="AT4G01395"/>
    </source>
</evidence>
<evidence type="ECO:0000312" key="7">
    <source>
        <dbReference type="EMBL" id="AAC19289.1"/>
    </source>
</evidence>
<proteinExistence type="evidence at protein level"/>
<sequence length="738" mass="82978">MPEIEQDDAAAETVDSSTVKFGTPEALEYVRSLTDVGAMTRLLHECIAYQRSLDSDLDTLLSQRTELDRNLVQLQRSAEILDIVKADADHMLGNVRSTCDLADQVSGKVRELDLAQSRVNVTLSRIDAIVERGNCIEGVKTALESEDYESAAKFVQRFLQIDLQYKDSGSDQSEQLHASKEQLEGIAKKKLLAAIDQRDHPTILRFVRLYSPLGMETEGLQLYVGYLKKVIALRGRMEYENVVELMEQGLGQVNFVGCLTNLFKDIVMAIEENDEILRGLCGEDGVAYAICELQEECDLRGSLILKKYMDFRKLAILASDINNSPNLNILPGGASEGPDPREVELYVEEILSLMQLGEDYTEFMVSKIKSLTSVDPELLPTATKAFRNKSFSKAIQDVTRYYVILEGFFMVENVRKAIRIDEHVPDSLTTSMVDDVFYVLQSCLRRAISTSNISSVIAVLSYAGSLLGNDYHEALQQKIREPNLGARLFLGGIGVENTGTEIATALNNMDVSCEYILKLKHEIEEQCTEVFPAPADRERIKSCLSELGELSSTFKQLLNSGMEQLVATVTPRIRPVLDTVATISYELTETEYAENEVNDPWVQRLLHSVETNAAWLQPLMTSNNYDSFLHLIIDFIVKRLEVIMMQKRFSQLGGLQLDRDTRALVSHFSGMTQRTVRDKFARLTQMATILNLEKVSEILDFWGENSGPMTWRLTPAEVRRVLGLRVEFKPESIAALKL</sequence>
<dbReference type="EMBL" id="AF069300">
    <property type="protein sequence ID" value="AAC19289.1"/>
    <property type="status" value="ALT_SEQ"/>
    <property type="molecule type" value="Genomic_DNA"/>
</dbReference>
<dbReference type="EMBL" id="AL161491">
    <property type="protein sequence ID" value="CAB80949.1"/>
    <property type="status" value="ALT_SEQ"/>
    <property type="molecule type" value="Genomic_DNA"/>
</dbReference>
<dbReference type="EMBL" id="CP002687">
    <property type="protein sequence ID" value="ANM66918.1"/>
    <property type="molecule type" value="Genomic_DNA"/>
</dbReference>
<dbReference type="EMBL" id="AY120763">
    <property type="protein sequence ID" value="AAM53321.1"/>
    <property type="molecule type" value="mRNA"/>
</dbReference>
<dbReference type="EMBL" id="BT010336">
    <property type="protein sequence ID" value="AAQ56779.1"/>
    <property type="molecule type" value="mRNA"/>
</dbReference>
<dbReference type="PIR" id="C85018">
    <property type="entry name" value="C85018"/>
</dbReference>
<dbReference type="PIR" id="T01377">
    <property type="entry name" value="T01377"/>
</dbReference>
<dbReference type="RefSeq" id="NP_001154198.1">
    <property type="nucleotide sequence ID" value="NM_001160726.2"/>
</dbReference>
<dbReference type="SMR" id="Q8L838"/>
<dbReference type="BioGRID" id="13234">
    <property type="interactions" value="8"/>
</dbReference>
<dbReference type="FunCoup" id="Q8L838">
    <property type="interactions" value="4506"/>
</dbReference>
<dbReference type="IntAct" id="Q8L838">
    <property type="interactions" value="1"/>
</dbReference>
<dbReference type="STRING" id="3702.Q8L838"/>
<dbReference type="GlyGen" id="Q8L838">
    <property type="glycosylation" value="1 site"/>
</dbReference>
<dbReference type="PaxDb" id="3702-AT4G01400.1"/>
<dbReference type="ProteomicsDB" id="240914"/>
<dbReference type="EnsemblPlants" id="AT4G01395.1">
    <property type="protein sequence ID" value="AT4G01395.1"/>
    <property type="gene ID" value="AT4G01395"/>
</dbReference>
<dbReference type="GeneID" id="827943"/>
<dbReference type="Gramene" id="AT4G01395.1">
    <property type="protein sequence ID" value="AT4G01395.1"/>
    <property type="gene ID" value="AT4G01395"/>
</dbReference>
<dbReference type="KEGG" id="ath:AT4G01395"/>
<dbReference type="Araport" id="AT4G01395"/>
<dbReference type="TAIR" id="AT4G01395"/>
<dbReference type="eggNOG" id="KOG0412">
    <property type="taxonomic scope" value="Eukaryota"/>
</dbReference>
<dbReference type="eggNOG" id="KOG4197">
    <property type="taxonomic scope" value="Eukaryota"/>
</dbReference>
<dbReference type="HOGENOM" id="CLU_014853_2_0_1"/>
<dbReference type="InParanoid" id="Q8L838"/>
<dbReference type="OMA" id="RASECQQ"/>
<dbReference type="PRO" id="PR:Q8L838"/>
<dbReference type="Proteomes" id="UP000006548">
    <property type="component" value="Chromosome 4"/>
</dbReference>
<dbReference type="ExpressionAtlas" id="Q8L838">
    <property type="expression patterns" value="baseline and differential"/>
</dbReference>
<dbReference type="GO" id="GO:0000139">
    <property type="term" value="C:Golgi membrane"/>
    <property type="evidence" value="ECO:0007669"/>
    <property type="project" value="UniProtKB-SubCell"/>
</dbReference>
<dbReference type="GO" id="GO:0015031">
    <property type="term" value="P:protein transport"/>
    <property type="evidence" value="ECO:0007669"/>
    <property type="project" value="UniProtKB-KW"/>
</dbReference>
<dbReference type="Gene3D" id="1.20.58.1970">
    <property type="match status" value="1"/>
</dbReference>
<dbReference type="Gene3D" id="1.10.287.1060">
    <property type="entry name" value="ESAT-6-like"/>
    <property type="match status" value="1"/>
</dbReference>
<dbReference type="InterPro" id="IPR048682">
    <property type="entry name" value="COG4"/>
</dbReference>
<dbReference type="InterPro" id="IPR048684">
    <property type="entry name" value="COG4_C"/>
</dbReference>
<dbReference type="InterPro" id="IPR013167">
    <property type="entry name" value="COG4_M"/>
</dbReference>
<dbReference type="InterPro" id="IPR048680">
    <property type="entry name" value="COG4_N"/>
</dbReference>
<dbReference type="PANTHER" id="PTHR24016">
    <property type="entry name" value="CONSERVED OLIGOMERIC GOLGI COMPLEX SUBUNIT 4"/>
    <property type="match status" value="1"/>
</dbReference>
<dbReference type="PANTHER" id="PTHR24016:SF0">
    <property type="entry name" value="CONSERVED OLIGOMERIC GOLGI COMPLEX SUBUNIT 4"/>
    <property type="match status" value="1"/>
</dbReference>
<dbReference type="Pfam" id="PF20662">
    <property type="entry name" value="COG4_C"/>
    <property type="match status" value="1"/>
</dbReference>
<dbReference type="Pfam" id="PF08318">
    <property type="entry name" value="COG4_m"/>
    <property type="match status" value="1"/>
</dbReference>
<dbReference type="Pfam" id="PF20663">
    <property type="entry name" value="COG4_N"/>
    <property type="match status" value="1"/>
</dbReference>
<dbReference type="SMART" id="SM00762">
    <property type="entry name" value="Cog4"/>
    <property type="match status" value="1"/>
</dbReference>
<reference key="1">
    <citation type="journal article" date="1999" name="Nature">
        <title>Sequence and analysis of chromosome 4 of the plant Arabidopsis thaliana.</title>
        <authorList>
            <person name="Mayer K.F.X."/>
            <person name="Schueller C."/>
            <person name="Wambutt R."/>
            <person name="Murphy G."/>
            <person name="Volckaert G."/>
            <person name="Pohl T."/>
            <person name="Duesterhoeft A."/>
            <person name="Stiekema W."/>
            <person name="Entian K.-D."/>
            <person name="Terryn N."/>
            <person name="Harris B."/>
            <person name="Ansorge W."/>
            <person name="Brandt P."/>
            <person name="Grivell L.A."/>
            <person name="Rieger M."/>
            <person name="Weichselgartner M."/>
            <person name="de Simone V."/>
            <person name="Obermaier B."/>
            <person name="Mache R."/>
            <person name="Mueller M."/>
            <person name="Kreis M."/>
            <person name="Delseny M."/>
            <person name="Puigdomenech P."/>
            <person name="Watson M."/>
            <person name="Schmidtheini T."/>
            <person name="Reichert B."/>
            <person name="Portetelle D."/>
            <person name="Perez-Alonso M."/>
            <person name="Boutry M."/>
            <person name="Bancroft I."/>
            <person name="Vos P."/>
            <person name="Hoheisel J."/>
            <person name="Zimmermann W."/>
            <person name="Wedler H."/>
            <person name="Ridley P."/>
            <person name="Langham S.-A."/>
            <person name="McCullagh B."/>
            <person name="Bilham L."/>
            <person name="Robben J."/>
            <person name="van der Schueren J."/>
            <person name="Grymonprez B."/>
            <person name="Chuang Y.-J."/>
            <person name="Vandenbussche F."/>
            <person name="Braeken M."/>
            <person name="Weltjens I."/>
            <person name="Voet M."/>
            <person name="Bastiaens I."/>
            <person name="Aert R."/>
            <person name="Defoor E."/>
            <person name="Weitzenegger T."/>
            <person name="Bothe G."/>
            <person name="Ramsperger U."/>
            <person name="Hilbert H."/>
            <person name="Braun M."/>
            <person name="Holzer E."/>
            <person name="Brandt A."/>
            <person name="Peters S."/>
            <person name="van Staveren M."/>
            <person name="Dirkse W."/>
            <person name="Mooijman P."/>
            <person name="Klein Lankhorst R."/>
            <person name="Rose M."/>
            <person name="Hauf J."/>
            <person name="Koetter P."/>
            <person name="Berneiser S."/>
            <person name="Hempel S."/>
            <person name="Feldpausch M."/>
            <person name="Lamberth S."/>
            <person name="Van den Daele H."/>
            <person name="De Keyser A."/>
            <person name="Buysshaert C."/>
            <person name="Gielen J."/>
            <person name="Villarroel R."/>
            <person name="De Clercq R."/>
            <person name="van Montagu M."/>
            <person name="Rogers J."/>
            <person name="Cronin A."/>
            <person name="Quail M.A."/>
            <person name="Bray-Allen S."/>
            <person name="Clark L."/>
            <person name="Doggett J."/>
            <person name="Hall S."/>
            <person name="Kay M."/>
            <person name="Lennard N."/>
            <person name="McLay K."/>
            <person name="Mayes R."/>
            <person name="Pettett A."/>
            <person name="Rajandream M.A."/>
            <person name="Lyne M."/>
            <person name="Benes V."/>
            <person name="Rechmann S."/>
            <person name="Borkova D."/>
            <person name="Bloecker H."/>
            <person name="Scharfe M."/>
            <person name="Grimm M."/>
            <person name="Loehnert T.-H."/>
            <person name="Dose S."/>
            <person name="de Haan M."/>
            <person name="Maarse A.C."/>
            <person name="Schaefer M."/>
            <person name="Mueller-Auer S."/>
            <person name="Gabel C."/>
            <person name="Fuchs M."/>
            <person name="Fartmann B."/>
            <person name="Granderath K."/>
            <person name="Dauner D."/>
            <person name="Herzl A."/>
            <person name="Neumann S."/>
            <person name="Argiriou A."/>
            <person name="Vitale D."/>
            <person name="Liguori R."/>
            <person name="Piravandi E."/>
            <person name="Massenet O."/>
            <person name="Quigley F."/>
            <person name="Clabauld G."/>
            <person name="Muendlein A."/>
            <person name="Felber R."/>
            <person name="Schnabl S."/>
            <person name="Hiller R."/>
            <person name="Schmidt W."/>
            <person name="Lecharny A."/>
            <person name="Aubourg S."/>
            <person name="Chefdor F."/>
            <person name="Cooke R."/>
            <person name="Berger C."/>
            <person name="Monfort A."/>
            <person name="Casacuberta E."/>
            <person name="Gibbons T."/>
            <person name="Weber N."/>
            <person name="Vandenbol M."/>
            <person name="Bargues M."/>
            <person name="Terol J."/>
            <person name="Torres A."/>
            <person name="Perez-Perez A."/>
            <person name="Purnelle B."/>
            <person name="Bent E."/>
            <person name="Johnson S."/>
            <person name="Tacon D."/>
            <person name="Jesse T."/>
            <person name="Heijnen L."/>
            <person name="Schwarz S."/>
            <person name="Scholler P."/>
            <person name="Heber S."/>
            <person name="Francs P."/>
            <person name="Bielke C."/>
            <person name="Frishman D."/>
            <person name="Haase D."/>
            <person name="Lemcke K."/>
            <person name="Mewes H.-W."/>
            <person name="Stocker S."/>
            <person name="Zaccaria P."/>
            <person name="Bevan M."/>
            <person name="Wilson R.K."/>
            <person name="de la Bastide M."/>
            <person name="Habermann K."/>
            <person name="Parnell L."/>
            <person name="Dedhia N."/>
            <person name="Gnoj L."/>
            <person name="Schutz K."/>
            <person name="Huang E."/>
            <person name="Spiegel L."/>
            <person name="Sekhon M."/>
            <person name="Murray J."/>
            <person name="Sheet P."/>
            <person name="Cordes M."/>
            <person name="Abu-Threideh J."/>
            <person name="Stoneking T."/>
            <person name="Kalicki J."/>
            <person name="Graves T."/>
            <person name="Harmon G."/>
            <person name="Edwards J."/>
            <person name="Latreille P."/>
            <person name="Courtney L."/>
            <person name="Cloud J."/>
            <person name="Abbott A."/>
            <person name="Scott K."/>
            <person name="Johnson D."/>
            <person name="Minx P."/>
            <person name="Bentley D."/>
            <person name="Fulton B."/>
            <person name="Miller N."/>
            <person name="Greco T."/>
            <person name="Kemp K."/>
            <person name="Kramer J."/>
            <person name="Fulton L."/>
            <person name="Mardis E."/>
            <person name="Dante M."/>
            <person name="Pepin K."/>
            <person name="Hillier L.W."/>
            <person name="Nelson J."/>
            <person name="Spieth J."/>
            <person name="Ryan E."/>
            <person name="Andrews S."/>
            <person name="Geisel C."/>
            <person name="Layman D."/>
            <person name="Du H."/>
            <person name="Ali J."/>
            <person name="Berghoff A."/>
            <person name="Jones K."/>
            <person name="Drone K."/>
            <person name="Cotton M."/>
            <person name="Joshu C."/>
            <person name="Antonoiu B."/>
            <person name="Zidanic M."/>
            <person name="Strong C."/>
            <person name="Sun H."/>
            <person name="Lamar B."/>
            <person name="Yordan C."/>
            <person name="Ma P."/>
            <person name="Zhong J."/>
            <person name="Preston R."/>
            <person name="Vil D."/>
            <person name="Shekher M."/>
            <person name="Matero A."/>
            <person name="Shah R."/>
            <person name="Swaby I.K."/>
            <person name="O'Shaughnessy A."/>
            <person name="Rodriguez M."/>
            <person name="Hoffman J."/>
            <person name="Till S."/>
            <person name="Granat S."/>
            <person name="Shohdy N."/>
            <person name="Hasegawa A."/>
            <person name="Hameed A."/>
            <person name="Lodhi M."/>
            <person name="Johnson A."/>
            <person name="Chen E."/>
            <person name="Marra M.A."/>
            <person name="Martienssen R."/>
            <person name="McCombie W.R."/>
        </authorList>
    </citation>
    <scope>NUCLEOTIDE SEQUENCE [LARGE SCALE GENOMIC DNA]</scope>
    <source>
        <strain>cv. Columbia</strain>
    </source>
</reference>
<reference key="2">
    <citation type="journal article" date="2017" name="Plant J.">
        <title>Araport11: a complete reannotation of the Arabidopsis thaliana reference genome.</title>
        <authorList>
            <person name="Cheng C.Y."/>
            <person name="Krishnakumar V."/>
            <person name="Chan A.P."/>
            <person name="Thibaud-Nissen F."/>
            <person name="Schobel S."/>
            <person name="Town C.D."/>
        </authorList>
    </citation>
    <scope>GENOME REANNOTATION</scope>
    <source>
        <strain>cv. Columbia</strain>
    </source>
</reference>
<reference key="3">
    <citation type="journal article" date="2003" name="Science">
        <title>Empirical analysis of transcriptional activity in the Arabidopsis genome.</title>
        <authorList>
            <person name="Yamada K."/>
            <person name="Lim J."/>
            <person name="Dale J.M."/>
            <person name="Chen H."/>
            <person name="Shinn P."/>
            <person name="Palm C.J."/>
            <person name="Southwick A.M."/>
            <person name="Wu H.C."/>
            <person name="Kim C.J."/>
            <person name="Nguyen M."/>
            <person name="Pham P.K."/>
            <person name="Cheuk R.F."/>
            <person name="Karlin-Newmann G."/>
            <person name="Liu S.X."/>
            <person name="Lam B."/>
            <person name="Sakano H."/>
            <person name="Wu T."/>
            <person name="Yu G."/>
            <person name="Miranda M."/>
            <person name="Quach H.L."/>
            <person name="Tripp M."/>
            <person name="Chang C.H."/>
            <person name="Lee J.M."/>
            <person name="Toriumi M.J."/>
            <person name="Chan M.M."/>
            <person name="Tang C.C."/>
            <person name="Onodera C.S."/>
            <person name="Deng J.M."/>
            <person name="Akiyama K."/>
            <person name="Ansari Y."/>
            <person name="Arakawa T."/>
            <person name="Banh J."/>
            <person name="Banno F."/>
            <person name="Bowser L."/>
            <person name="Brooks S.Y."/>
            <person name="Carninci P."/>
            <person name="Chao Q."/>
            <person name="Choy N."/>
            <person name="Enju A."/>
            <person name="Goldsmith A.D."/>
            <person name="Gurjal M."/>
            <person name="Hansen N.F."/>
            <person name="Hayashizaki Y."/>
            <person name="Johnson-Hopson C."/>
            <person name="Hsuan V.W."/>
            <person name="Iida K."/>
            <person name="Karnes M."/>
            <person name="Khan S."/>
            <person name="Koesema E."/>
            <person name="Ishida J."/>
            <person name="Jiang P.X."/>
            <person name="Jones T."/>
            <person name="Kawai J."/>
            <person name="Kamiya A."/>
            <person name="Meyers C."/>
            <person name="Nakajima M."/>
            <person name="Narusaka M."/>
            <person name="Seki M."/>
            <person name="Sakurai T."/>
            <person name="Satou M."/>
            <person name="Tamse R."/>
            <person name="Vaysberg M."/>
            <person name="Wallender E.K."/>
            <person name="Wong C."/>
            <person name="Yamamura Y."/>
            <person name="Yuan S."/>
            <person name="Shinozaki K."/>
            <person name="Davis R.W."/>
            <person name="Theologis A."/>
            <person name="Ecker J.R."/>
        </authorList>
    </citation>
    <scope>NUCLEOTIDE SEQUENCE [LARGE SCALE MRNA]</scope>
    <source>
        <strain>cv. Columbia</strain>
    </source>
</reference>
<reference key="4">
    <citation type="journal article" date="2016" name="PLoS Genet.">
        <title>Arabidopsis COG complex subunits COG3 and COG8 modulate golgi morphology, vesicle trafficking homeostasis and are essential for pollen tube growth.</title>
        <authorList>
            <person name="Tan X."/>
            <person name="Cao K."/>
            <person name="Liu F."/>
            <person name="Li Y."/>
            <person name="Li P."/>
            <person name="Gao C."/>
            <person name="Ding Y."/>
            <person name="Lan Z."/>
            <person name="Shi Z."/>
            <person name="Rui Q."/>
            <person name="Feng Y."/>
            <person name="Liu Y."/>
            <person name="Zhao Y."/>
            <person name="Wu C."/>
            <person name="Zhang Q."/>
            <person name="Li Y."/>
            <person name="Jiang L."/>
            <person name="Bao Y."/>
        </authorList>
    </citation>
    <scope>INTERACTION WITH COG2 AND COG3</scope>
    <scope>GENE FAMILY</scope>
    <scope>NOMENCLATURE</scope>
</reference>
<feature type="chain" id="PRO_0000363409" description="Conserved oligomeric Golgi complex subunit 4">
    <location>
        <begin position="1"/>
        <end position="738"/>
    </location>
</feature>
<comment type="function">
    <text evidence="1">Required for normal Golgi function.</text>
</comment>
<comment type="subunit">
    <text evidence="2 5">Component of the conserved oligomeric Golgi complex which is composed of eight different subunits and is required for normal Golgi morphology and localization (Probable). Interacts with COG2 and COG3 (PubMed:27448097).</text>
</comment>
<comment type="subcellular location">
    <subcellularLocation>
        <location evidence="1">Golgi apparatus membrane</location>
        <topology evidence="1">Peripheral membrane protein</topology>
        <orientation evidence="1">Cytoplasmic side</orientation>
    </subcellularLocation>
</comment>
<comment type="similarity">
    <text evidence="4">Belongs to the COG4 family.</text>
</comment>
<comment type="sequence caution" evidence="4">
    <conflict type="erroneous gene model prediction">
        <sequence resource="EMBL-CDS" id="AAC19289"/>
    </conflict>
    <text>The predicted gene has been split into 2 genes: At4g01395 and At4g01400.</text>
</comment>
<comment type="sequence caution" evidence="4">
    <conflict type="erroneous gene model prediction">
        <sequence resource="EMBL-CDS" id="CAB80949"/>
    </conflict>
    <text>The predicted gene has been split into 2 genes: At4g01395 and At4g01400.</text>
</comment>
<name>COG4_ARATH</name>
<keyword id="KW-0333">Golgi apparatus</keyword>
<keyword id="KW-0472">Membrane</keyword>
<keyword id="KW-0653">Protein transport</keyword>
<keyword id="KW-1185">Reference proteome</keyword>
<keyword id="KW-0813">Transport</keyword>